<name>IF2_PARDP</name>
<dbReference type="EMBL" id="CP000489">
    <property type="protein sequence ID" value="ABL70681.1"/>
    <property type="molecule type" value="Genomic_DNA"/>
</dbReference>
<dbReference type="RefSeq" id="WP_011748874.1">
    <property type="nucleotide sequence ID" value="NC_008686.1"/>
</dbReference>
<dbReference type="SMR" id="A1B587"/>
<dbReference type="STRING" id="318586.Pden_2594"/>
<dbReference type="EnsemblBacteria" id="ABL70681">
    <property type="protein sequence ID" value="ABL70681"/>
    <property type="gene ID" value="Pden_2594"/>
</dbReference>
<dbReference type="GeneID" id="93450987"/>
<dbReference type="KEGG" id="pde:Pden_2594"/>
<dbReference type="eggNOG" id="COG0532">
    <property type="taxonomic scope" value="Bacteria"/>
</dbReference>
<dbReference type="HOGENOM" id="CLU_006301_10_1_5"/>
<dbReference type="OrthoDB" id="9811804at2"/>
<dbReference type="Proteomes" id="UP000000361">
    <property type="component" value="Chromosome 1"/>
</dbReference>
<dbReference type="GO" id="GO:0005829">
    <property type="term" value="C:cytosol"/>
    <property type="evidence" value="ECO:0007669"/>
    <property type="project" value="TreeGrafter"/>
</dbReference>
<dbReference type="GO" id="GO:0005525">
    <property type="term" value="F:GTP binding"/>
    <property type="evidence" value="ECO:0007669"/>
    <property type="project" value="UniProtKB-KW"/>
</dbReference>
<dbReference type="GO" id="GO:0003924">
    <property type="term" value="F:GTPase activity"/>
    <property type="evidence" value="ECO:0007669"/>
    <property type="project" value="UniProtKB-UniRule"/>
</dbReference>
<dbReference type="GO" id="GO:0097216">
    <property type="term" value="F:guanosine tetraphosphate binding"/>
    <property type="evidence" value="ECO:0007669"/>
    <property type="project" value="UniProtKB-ARBA"/>
</dbReference>
<dbReference type="GO" id="GO:0003743">
    <property type="term" value="F:translation initiation factor activity"/>
    <property type="evidence" value="ECO:0007669"/>
    <property type="project" value="UniProtKB-UniRule"/>
</dbReference>
<dbReference type="CDD" id="cd01887">
    <property type="entry name" value="IF2_eIF5B"/>
    <property type="match status" value="1"/>
</dbReference>
<dbReference type="CDD" id="cd03702">
    <property type="entry name" value="IF2_mtIF2_II"/>
    <property type="match status" value="1"/>
</dbReference>
<dbReference type="CDD" id="cd03692">
    <property type="entry name" value="mtIF2_IVc"/>
    <property type="match status" value="1"/>
</dbReference>
<dbReference type="FunFam" id="2.40.30.10:FF:000007">
    <property type="entry name" value="Translation initiation factor IF-2"/>
    <property type="match status" value="1"/>
</dbReference>
<dbReference type="FunFam" id="2.40.30.10:FF:000008">
    <property type="entry name" value="Translation initiation factor IF-2"/>
    <property type="match status" value="1"/>
</dbReference>
<dbReference type="FunFam" id="3.40.50.10050:FF:000001">
    <property type="entry name" value="Translation initiation factor IF-2"/>
    <property type="match status" value="1"/>
</dbReference>
<dbReference type="FunFam" id="3.40.50.300:FF:000019">
    <property type="entry name" value="Translation initiation factor IF-2"/>
    <property type="match status" value="1"/>
</dbReference>
<dbReference type="Gene3D" id="3.40.50.300">
    <property type="entry name" value="P-loop containing nucleotide triphosphate hydrolases"/>
    <property type="match status" value="1"/>
</dbReference>
<dbReference type="Gene3D" id="2.40.30.10">
    <property type="entry name" value="Translation factors"/>
    <property type="match status" value="2"/>
</dbReference>
<dbReference type="Gene3D" id="3.40.50.10050">
    <property type="entry name" value="Translation initiation factor IF- 2, domain 3"/>
    <property type="match status" value="1"/>
</dbReference>
<dbReference type="HAMAP" id="MF_00100_B">
    <property type="entry name" value="IF_2_B"/>
    <property type="match status" value="1"/>
</dbReference>
<dbReference type="InterPro" id="IPR053905">
    <property type="entry name" value="EF-G-like_DII"/>
</dbReference>
<dbReference type="InterPro" id="IPR004161">
    <property type="entry name" value="EFTu-like_2"/>
</dbReference>
<dbReference type="InterPro" id="IPR013575">
    <property type="entry name" value="IF2_assoc_dom_bac"/>
</dbReference>
<dbReference type="InterPro" id="IPR044145">
    <property type="entry name" value="IF2_II"/>
</dbReference>
<dbReference type="InterPro" id="IPR006847">
    <property type="entry name" value="IF2_N"/>
</dbReference>
<dbReference type="InterPro" id="IPR027417">
    <property type="entry name" value="P-loop_NTPase"/>
</dbReference>
<dbReference type="InterPro" id="IPR005225">
    <property type="entry name" value="Small_GTP-bd"/>
</dbReference>
<dbReference type="InterPro" id="IPR000795">
    <property type="entry name" value="T_Tr_GTP-bd_dom"/>
</dbReference>
<dbReference type="InterPro" id="IPR000178">
    <property type="entry name" value="TF_IF2_bacterial-like"/>
</dbReference>
<dbReference type="InterPro" id="IPR015760">
    <property type="entry name" value="TIF_IF2"/>
</dbReference>
<dbReference type="InterPro" id="IPR023115">
    <property type="entry name" value="TIF_IF2_dom3"/>
</dbReference>
<dbReference type="InterPro" id="IPR036925">
    <property type="entry name" value="TIF_IF2_dom3_sf"/>
</dbReference>
<dbReference type="InterPro" id="IPR009000">
    <property type="entry name" value="Transl_B-barrel_sf"/>
</dbReference>
<dbReference type="NCBIfam" id="TIGR00487">
    <property type="entry name" value="IF-2"/>
    <property type="match status" value="1"/>
</dbReference>
<dbReference type="NCBIfam" id="TIGR00231">
    <property type="entry name" value="small_GTP"/>
    <property type="match status" value="1"/>
</dbReference>
<dbReference type="PANTHER" id="PTHR43381:SF5">
    <property type="entry name" value="TR-TYPE G DOMAIN-CONTAINING PROTEIN"/>
    <property type="match status" value="1"/>
</dbReference>
<dbReference type="PANTHER" id="PTHR43381">
    <property type="entry name" value="TRANSLATION INITIATION FACTOR IF-2-RELATED"/>
    <property type="match status" value="1"/>
</dbReference>
<dbReference type="Pfam" id="PF22042">
    <property type="entry name" value="EF-G_D2"/>
    <property type="match status" value="1"/>
</dbReference>
<dbReference type="Pfam" id="PF00009">
    <property type="entry name" value="GTP_EFTU"/>
    <property type="match status" value="1"/>
</dbReference>
<dbReference type="Pfam" id="PF03144">
    <property type="entry name" value="GTP_EFTU_D2"/>
    <property type="match status" value="1"/>
</dbReference>
<dbReference type="Pfam" id="PF11987">
    <property type="entry name" value="IF-2"/>
    <property type="match status" value="1"/>
</dbReference>
<dbReference type="Pfam" id="PF08364">
    <property type="entry name" value="IF2_assoc"/>
    <property type="match status" value="1"/>
</dbReference>
<dbReference type="Pfam" id="PF04760">
    <property type="entry name" value="IF2_N"/>
    <property type="match status" value="1"/>
</dbReference>
<dbReference type="SUPFAM" id="SSF52156">
    <property type="entry name" value="Initiation factor IF2/eIF5b, domain 3"/>
    <property type="match status" value="1"/>
</dbReference>
<dbReference type="SUPFAM" id="SSF52540">
    <property type="entry name" value="P-loop containing nucleoside triphosphate hydrolases"/>
    <property type="match status" value="1"/>
</dbReference>
<dbReference type="SUPFAM" id="SSF50447">
    <property type="entry name" value="Translation proteins"/>
    <property type="match status" value="2"/>
</dbReference>
<dbReference type="PROSITE" id="PS51722">
    <property type="entry name" value="G_TR_2"/>
    <property type="match status" value="1"/>
</dbReference>
<dbReference type="PROSITE" id="PS01176">
    <property type="entry name" value="IF2"/>
    <property type="match status" value="1"/>
</dbReference>
<evidence type="ECO:0000250" key="1"/>
<evidence type="ECO:0000255" key="2">
    <source>
        <dbReference type="HAMAP-Rule" id="MF_00100"/>
    </source>
</evidence>
<evidence type="ECO:0000256" key="3">
    <source>
        <dbReference type="SAM" id="MobiDB-lite"/>
    </source>
</evidence>
<protein>
    <recommendedName>
        <fullName evidence="2">Translation initiation factor IF-2</fullName>
    </recommendedName>
</protein>
<proteinExistence type="inferred from homology"/>
<accession>A1B587</accession>
<keyword id="KW-0963">Cytoplasm</keyword>
<keyword id="KW-0342">GTP-binding</keyword>
<keyword id="KW-0396">Initiation factor</keyword>
<keyword id="KW-0547">Nucleotide-binding</keyword>
<keyword id="KW-0648">Protein biosynthesis</keyword>
<keyword id="KW-1185">Reference proteome</keyword>
<feature type="chain" id="PRO_1000008293" description="Translation initiation factor IF-2">
    <location>
        <begin position="1"/>
        <end position="848"/>
    </location>
</feature>
<feature type="domain" description="tr-type G">
    <location>
        <begin position="346"/>
        <end position="514"/>
    </location>
</feature>
<feature type="region of interest" description="Disordered" evidence="3">
    <location>
        <begin position="1"/>
        <end position="265"/>
    </location>
</feature>
<feature type="region of interest" description="G1" evidence="1">
    <location>
        <begin position="355"/>
        <end position="362"/>
    </location>
</feature>
<feature type="region of interest" description="G2" evidence="1">
    <location>
        <begin position="380"/>
        <end position="384"/>
    </location>
</feature>
<feature type="region of interest" description="G3" evidence="1">
    <location>
        <begin position="402"/>
        <end position="405"/>
    </location>
</feature>
<feature type="region of interest" description="G4" evidence="1">
    <location>
        <begin position="456"/>
        <end position="459"/>
    </location>
</feature>
<feature type="region of interest" description="G5" evidence="1">
    <location>
        <begin position="492"/>
        <end position="494"/>
    </location>
</feature>
<feature type="compositionally biased region" description="Basic and acidic residues" evidence="3">
    <location>
        <begin position="89"/>
        <end position="162"/>
    </location>
</feature>
<feature type="compositionally biased region" description="Low complexity" evidence="3">
    <location>
        <begin position="163"/>
        <end position="179"/>
    </location>
</feature>
<feature type="compositionally biased region" description="Basic and acidic residues" evidence="3">
    <location>
        <begin position="191"/>
        <end position="219"/>
    </location>
</feature>
<feature type="binding site" evidence="2">
    <location>
        <begin position="355"/>
        <end position="362"/>
    </location>
    <ligand>
        <name>GTP</name>
        <dbReference type="ChEBI" id="CHEBI:37565"/>
    </ligand>
</feature>
<feature type="binding site" evidence="2">
    <location>
        <begin position="402"/>
        <end position="406"/>
    </location>
    <ligand>
        <name>GTP</name>
        <dbReference type="ChEBI" id="CHEBI:37565"/>
    </ligand>
</feature>
<feature type="binding site" evidence="2">
    <location>
        <begin position="456"/>
        <end position="459"/>
    </location>
    <ligand>
        <name>GTP</name>
        <dbReference type="ChEBI" id="CHEBI:37565"/>
    </ligand>
</feature>
<gene>
    <name evidence="2" type="primary">infB</name>
    <name type="ordered locus">Pden_2594</name>
</gene>
<comment type="function">
    <text evidence="2">One of the essential components for the initiation of protein synthesis. Protects formylmethionyl-tRNA from spontaneous hydrolysis and promotes its binding to the 30S ribosomal subunits. Also involved in the hydrolysis of GTP during the formation of the 70S ribosomal complex.</text>
</comment>
<comment type="subcellular location">
    <subcellularLocation>
        <location evidence="2">Cytoplasm</location>
    </subcellularLocation>
</comment>
<comment type="similarity">
    <text evidence="2">Belongs to the TRAFAC class translation factor GTPase superfamily. Classic translation factor GTPase family. IF-2 subfamily.</text>
</comment>
<reference key="1">
    <citation type="submission" date="2006-12" db="EMBL/GenBank/DDBJ databases">
        <title>Complete sequence of chromosome 1 of Paracoccus denitrificans PD1222.</title>
        <authorList>
            <person name="Copeland A."/>
            <person name="Lucas S."/>
            <person name="Lapidus A."/>
            <person name="Barry K."/>
            <person name="Detter J.C."/>
            <person name="Glavina del Rio T."/>
            <person name="Hammon N."/>
            <person name="Israni S."/>
            <person name="Dalin E."/>
            <person name="Tice H."/>
            <person name="Pitluck S."/>
            <person name="Munk A.C."/>
            <person name="Brettin T."/>
            <person name="Bruce D."/>
            <person name="Han C."/>
            <person name="Tapia R."/>
            <person name="Gilna P."/>
            <person name="Schmutz J."/>
            <person name="Larimer F."/>
            <person name="Land M."/>
            <person name="Hauser L."/>
            <person name="Kyrpides N."/>
            <person name="Lykidis A."/>
            <person name="Spiro S."/>
            <person name="Richardson D.J."/>
            <person name="Moir J.W.B."/>
            <person name="Ferguson S.J."/>
            <person name="van Spanning R.J.M."/>
            <person name="Richardson P."/>
        </authorList>
    </citation>
    <scope>NUCLEOTIDE SEQUENCE [LARGE SCALE GENOMIC DNA]</scope>
    <source>
        <strain>Pd 1222</strain>
    </source>
</reference>
<organism>
    <name type="scientific">Paracoccus denitrificans (strain Pd 1222)</name>
    <dbReference type="NCBI Taxonomy" id="318586"/>
    <lineage>
        <taxon>Bacteria</taxon>
        <taxon>Pseudomonadati</taxon>
        <taxon>Pseudomonadota</taxon>
        <taxon>Alphaproteobacteria</taxon>
        <taxon>Rhodobacterales</taxon>
        <taxon>Paracoccaceae</taxon>
        <taxon>Paracoccus</taxon>
    </lineage>
</organism>
<sequence>MSDTDGKKPLGLGGGRSGHVKQSFSHGRTHNVVVETKRKRVVVPGKTGAAAGGGRSGSPSAVSGDPSKRPAGISDAEMERRMAALRAAKAREVEEAAQRIADEKAREEERERRRLELEAKEREEREREEALRLKAEEDERRAREAELREKKKAEIAKPKTEARPATPADRAAAEAAAVRAETKGVSAAGPRKTDRDRDTRGGGGDDRDSRNKGRDDSRRTGKLSLSQALDGEGGRQRSLAAMKRKQEKARQKAMGGNQRAEKQVRDVQLPETIVVSELANRMAERTPDVIKSLMRMGMMVTANQSIDADTAELVIDEFGHHAVRVSDADVEQVIDQVEDKPEDLQPRAPIITIMGHVDHGKTSLLDAIRHANVVAGEAGGITQHIGAYQVKASNGAVLTFLDTPGHAAFTSMRARGAQVTDIVVLVVAADDAVMPQTVEAINHAKAAKVPMIVAINKIDKPAANPQKVRTDLLLHEVVVEAMSGEVQDVEVSAKTGQGLDTLLEAIALQAEILELKANPDRPAQGAVIEAQLDVGRGPVATVLVQNGTLKRGDIFVVGEQWGKVRALINDKGERVDEAGPSVPVEVLGLNGTPEAGDVLNVVSTEAQAREIADYRIQAAKDKRAAAGAAITLDQMLAKAKADENVAELPVVIKADVQGSAEAIVQALEKIGNDEVRVRVLHYGVGAITESDIGLAEASQAPVIGFNVRANAPARNAANQKGVEIRYYSIIYDLVDDIKAAASGLLSAEVRENFIGYAEIKEVFRVSGVGNVAGCLVTEGVARRSAGVRLLRDNVVIHEGTLKTLKRFKDEVKEVQSGQECGMAFENYDDIRKGDVIEIFEREEVQRQL</sequence>